<sequence length="158" mass="17286">MSKKTTPSSAPLDNTPYDVTEQVGHLLRKAYQRHTAIFQQQACDPQLTSIQFVTLCALRDHGPSSQAELIKATAVDQATIRGIVERLKARELVQLSPDPGDRRKVIVELTESGAALLDAMIPCARQISELSMGSLNAGERVAILYLLRKMIDSDENAG</sequence>
<name>NICR_PSEPK</name>
<protein>
    <recommendedName>
        <fullName>HTH-type transcriptional repressor NicR</fullName>
    </recommendedName>
    <alternativeName>
        <fullName>Nicotinate degradation protein R</fullName>
    </alternativeName>
</protein>
<organism>
    <name type="scientific">Pseudomonas putida (strain ATCC 47054 / DSM 6125 / CFBP 8728 / NCIMB 11950 / KT2440)</name>
    <dbReference type="NCBI Taxonomy" id="160488"/>
    <lineage>
        <taxon>Bacteria</taxon>
        <taxon>Pseudomonadati</taxon>
        <taxon>Pseudomonadota</taxon>
        <taxon>Gammaproteobacteria</taxon>
        <taxon>Pseudomonadales</taxon>
        <taxon>Pseudomonadaceae</taxon>
        <taxon>Pseudomonas</taxon>
    </lineage>
</organism>
<evidence type="ECO:0000255" key="1">
    <source>
        <dbReference type="PROSITE-ProRule" id="PRU00345"/>
    </source>
</evidence>
<evidence type="ECO:0000269" key="2">
    <source>
    </source>
</evidence>
<evidence type="ECO:0000269" key="3">
    <source>
    </source>
</evidence>
<gene>
    <name type="primary">nicR</name>
    <name type="ordered locus">PP_3946</name>
</gene>
<reference key="1">
    <citation type="journal article" date="2002" name="Environ. Microbiol.">
        <title>Complete genome sequence and comparative analysis of the metabolically versatile Pseudomonas putida KT2440.</title>
        <authorList>
            <person name="Nelson K.E."/>
            <person name="Weinel C."/>
            <person name="Paulsen I.T."/>
            <person name="Dodson R.J."/>
            <person name="Hilbert H."/>
            <person name="Martins dos Santos V.A.P."/>
            <person name="Fouts D.E."/>
            <person name="Gill S.R."/>
            <person name="Pop M."/>
            <person name="Holmes M."/>
            <person name="Brinkac L.M."/>
            <person name="Beanan M.J."/>
            <person name="DeBoy R.T."/>
            <person name="Daugherty S.C."/>
            <person name="Kolonay J.F."/>
            <person name="Madupu R."/>
            <person name="Nelson W.C."/>
            <person name="White O."/>
            <person name="Peterson J.D."/>
            <person name="Khouri H.M."/>
            <person name="Hance I."/>
            <person name="Chris Lee P."/>
            <person name="Holtzapple E.K."/>
            <person name="Scanlan D."/>
            <person name="Tran K."/>
            <person name="Moazzez A."/>
            <person name="Utterback T.R."/>
            <person name="Rizzo M."/>
            <person name="Lee K."/>
            <person name="Kosack D."/>
            <person name="Moestl D."/>
            <person name="Wedler H."/>
            <person name="Lauber J."/>
            <person name="Stjepandic D."/>
            <person name="Hoheisel J."/>
            <person name="Straetz M."/>
            <person name="Heim S."/>
            <person name="Kiewitz C."/>
            <person name="Eisen J.A."/>
            <person name="Timmis K.N."/>
            <person name="Duesterhoeft A."/>
            <person name="Tuemmler B."/>
            <person name="Fraser C.M."/>
        </authorList>
    </citation>
    <scope>NUCLEOTIDE SEQUENCE [LARGE SCALE GENOMIC DNA]</scope>
    <source>
        <strain>ATCC 47054 / DSM 6125 / CFBP 8728 / NCIMB 11950 / KT2440</strain>
    </source>
</reference>
<reference key="2">
    <citation type="journal article" date="2008" name="Proc. Natl. Acad. Sci. U.S.A.">
        <title>Deciphering the genetic determinants for aerobic nicotinic acid degradation: the nic cluster from Pseudomonas putida KT2440.</title>
        <authorList>
            <person name="Jimenez J.I."/>
            <person name="Canales A."/>
            <person name="Jimenez-Barbero J."/>
            <person name="Ginalski K."/>
            <person name="Rychlewski L."/>
            <person name="Garcia J.L."/>
            <person name="Diaz E."/>
        </authorList>
    </citation>
    <scope>FUNCTION</scope>
    <scope>PATHWAY</scope>
    <source>
        <strain>ATCC 47054 / DSM 6125 / CFBP 8728 / NCIMB 11950 / KT2440</strain>
    </source>
</reference>
<reference key="3">
    <citation type="journal article" date="2011" name="Environ. Microbiol.">
        <title>A finely tuned regulatory circuit of the nicotinic acid degradation pathway in Pseudomonas putida.</title>
        <authorList>
            <person name="Jimenez J.I."/>
            <person name="Juarez J.F."/>
            <person name="Garcia J.L."/>
            <person name="Diaz E."/>
        </authorList>
    </citation>
    <scope>FUNCTION</scope>
    <scope>PATHWAY</scope>
    <scope>DISRUPTION PHENOTYPE</scope>
    <scope>INDUCTION</scope>
    <source>
        <strain>ATCC 47054 / DSM 6125 / CFBP 8728 / NCIMB 11950 / KT2440</strain>
    </source>
</reference>
<accession>Q88FY0</accession>
<proteinExistence type="evidence at transcript level"/>
<feature type="chain" id="PRO_0000418485" description="HTH-type transcriptional repressor NicR">
    <location>
        <begin position="1"/>
        <end position="158"/>
    </location>
</feature>
<feature type="domain" description="HTH marR-type" evidence="1">
    <location>
        <begin position="20"/>
        <end position="152"/>
    </location>
</feature>
<feature type="DNA-binding region" description="H-T-H motif" evidence="1">
    <location>
        <begin position="66"/>
        <end position="89"/>
    </location>
</feature>
<dbReference type="EMBL" id="AE015451">
    <property type="protein sequence ID" value="AAN69540.1"/>
    <property type="molecule type" value="Genomic_DNA"/>
</dbReference>
<dbReference type="RefSeq" id="NP_746076.1">
    <property type="nucleotide sequence ID" value="NC_002947.4"/>
</dbReference>
<dbReference type="RefSeq" id="WP_003251120.1">
    <property type="nucleotide sequence ID" value="NZ_CP169744.1"/>
</dbReference>
<dbReference type="SMR" id="Q88FY0"/>
<dbReference type="STRING" id="160488.PP_3946"/>
<dbReference type="PaxDb" id="160488-PP_3946"/>
<dbReference type="KEGG" id="ppu:PP_3946"/>
<dbReference type="PATRIC" id="fig|160488.4.peg.4201"/>
<dbReference type="eggNOG" id="COG1846">
    <property type="taxonomic scope" value="Bacteria"/>
</dbReference>
<dbReference type="HOGENOM" id="CLU_083287_4_0_6"/>
<dbReference type="OrthoDB" id="9814496at2"/>
<dbReference type="PhylomeDB" id="Q88FY0"/>
<dbReference type="BioCyc" id="PPUT160488:G1G01-4211-MONOMER"/>
<dbReference type="UniPathway" id="UPA01010"/>
<dbReference type="Proteomes" id="UP000000556">
    <property type="component" value="Chromosome"/>
</dbReference>
<dbReference type="GO" id="GO:0003677">
    <property type="term" value="F:DNA binding"/>
    <property type="evidence" value="ECO:0007669"/>
    <property type="project" value="UniProtKB-KW"/>
</dbReference>
<dbReference type="GO" id="GO:0003700">
    <property type="term" value="F:DNA-binding transcription factor activity"/>
    <property type="evidence" value="ECO:0007669"/>
    <property type="project" value="InterPro"/>
</dbReference>
<dbReference type="GO" id="GO:0009056">
    <property type="term" value="P:catabolic process"/>
    <property type="evidence" value="ECO:0007669"/>
    <property type="project" value="UniProtKB-KW"/>
</dbReference>
<dbReference type="GO" id="GO:0006950">
    <property type="term" value="P:response to stress"/>
    <property type="evidence" value="ECO:0007669"/>
    <property type="project" value="TreeGrafter"/>
</dbReference>
<dbReference type="Gene3D" id="1.10.10.10">
    <property type="entry name" value="Winged helix-like DNA-binding domain superfamily/Winged helix DNA-binding domain"/>
    <property type="match status" value="1"/>
</dbReference>
<dbReference type="InterPro" id="IPR000835">
    <property type="entry name" value="HTH_MarR-typ"/>
</dbReference>
<dbReference type="InterPro" id="IPR039422">
    <property type="entry name" value="MarR/SlyA-like"/>
</dbReference>
<dbReference type="InterPro" id="IPR036388">
    <property type="entry name" value="WH-like_DNA-bd_sf"/>
</dbReference>
<dbReference type="InterPro" id="IPR036390">
    <property type="entry name" value="WH_DNA-bd_sf"/>
</dbReference>
<dbReference type="PANTHER" id="PTHR33164:SF95">
    <property type="entry name" value="TRANSCRIPTIONAL REGULATOR"/>
    <property type="match status" value="1"/>
</dbReference>
<dbReference type="PANTHER" id="PTHR33164">
    <property type="entry name" value="TRANSCRIPTIONAL REGULATOR, MARR FAMILY"/>
    <property type="match status" value="1"/>
</dbReference>
<dbReference type="Pfam" id="PF12802">
    <property type="entry name" value="MarR_2"/>
    <property type="match status" value="1"/>
</dbReference>
<dbReference type="PRINTS" id="PR00598">
    <property type="entry name" value="HTHMARR"/>
</dbReference>
<dbReference type="SMART" id="SM00347">
    <property type="entry name" value="HTH_MARR"/>
    <property type="match status" value="1"/>
</dbReference>
<dbReference type="SUPFAM" id="SSF46785">
    <property type="entry name" value="Winged helix' DNA-binding domain"/>
    <property type="match status" value="1"/>
</dbReference>
<dbReference type="PROSITE" id="PS50995">
    <property type="entry name" value="HTH_MARR_2"/>
    <property type="match status" value="1"/>
</dbReference>
<keyword id="KW-0058">Aromatic hydrocarbons catabolism</keyword>
<keyword id="KW-0238">DNA-binding</keyword>
<keyword id="KW-1185">Reference proteome</keyword>
<keyword id="KW-0678">Repressor</keyword>
<keyword id="KW-0804">Transcription</keyword>
<keyword id="KW-0805">Transcription regulation</keyword>
<comment type="function">
    <text evidence="2 3">Transcriptional repressor for the nicCDEFTP and nicXR operons, encoding the lower aerobic nicotinate degradation pathway. Acts under non-induced conditions: repression of the nicCDEFTP and nicXR operons becomes alleviated in presence of 6-hydroxynicotinate (6HNA).</text>
</comment>
<comment type="pathway">
    <text evidence="2 3">Cofactor degradation; nicotinate degradation [regulation].</text>
</comment>
<comment type="induction">
    <text evidence="3">Expressed both in the presence and in the absence of the 6-hydroxynicotinate (6HNA) inducer.</text>
</comment>
<comment type="disruption phenotype">
    <text evidence="3">Delayed growth when using nicotinate as sole carbon and energy source, growth is faster in the presence of 6HNA when compared with that of the wild-type strain.</text>
</comment>